<dbReference type="EC" id="3.1.3.-"/>
<dbReference type="EMBL" id="AE006468">
    <property type="protein sequence ID" value="AAL21197.1"/>
    <property type="molecule type" value="Genomic_DNA"/>
</dbReference>
<dbReference type="RefSeq" id="NP_461238.1">
    <property type="nucleotide sequence ID" value="NC_003197.2"/>
</dbReference>
<dbReference type="RefSeq" id="WP_000879248.1">
    <property type="nucleotide sequence ID" value="NC_003197.2"/>
</dbReference>
<dbReference type="SMR" id="Q8ZNF4"/>
<dbReference type="STRING" id="99287.STM2296"/>
<dbReference type="PaxDb" id="99287-STM2296"/>
<dbReference type="GeneID" id="1253818"/>
<dbReference type="KEGG" id="stm:STM2296"/>
<dbReference type="PATRIC" id="fig|99287.12.peg.2430"/>
<dbReference type="HOGENOM" id="CLU_106705_1_0_6"/>
<dbReference type="OMA" id="NFTVIVW"/>
<dbReference type="PhylomeDB" id="Q8ZNF4"/>
<dbReference type="BioCyc" id="SENT99287:STM2296-MONOMER"/>
<dbReference type="UniPathway" id="UPA00451"/>
<dbReference type="Proteomes" id="UP000001014">
    <property type="component" value="Chromosome"/>
</dbReference>
<dbReference type="GO" id="GO:0042597">
    <property type="term" value="C:periplasmic space"/>
    <property type="evidence" value="ECO:0007669"/>
    <property type="project" value="UniProtKB-SubCell"/>
</dbReference>
<dbReference type="GO" id="GO:0016791">
    <property type="term" value="F:phosphatase activity"/>
    <property type="evidence" value="ECO:0007669"/>
    <property type="project" value="UniProtKB-UniRule"/>
</dbReference>
<dbReference type="GO" id="GO:0008653">
    <property type="term" value="P:lipopolysaccharide metabolic process"/>
    <property type="evidence" value="ECO:0007669"/>
    <property type="project" value="UniProtKB-UniRule"/>
</dbReference>
<dbReference type="CDD" id="cd07040">
    <property type="entry name" value="HP"/>
    <property type="match status" value="1"/>
</dbReference>
<dbReference type="Gene3D" id="3.40.50.1240">
    <property type="entry name" value="Phosphoglycerate mutase-like"/>
    <property type="match status" value="1"/>
</dbReference>
<dbReference type="HAMAP" id="MF_01868">
    <property type="entry name" value="Ais"/>
    <property type="match status" value="1"/>
</dbReference>
<dbReference type="InterPro" id="IPR013078">
    <property type="entry name" value="His_Pase_superF_clade-1"/>
</dbReference>
<dbReference type="InterPro" id="IPR029033">
    <property type="entry name" value="His_PPase_superfam"/>
</dbReference>
<dbReference type="InterPro" id="IPR011310">
    <property type="entry name" value="LipoPS_heptP_Pase"/>
</dbReference>
<dbReference type="NCBIfam" id="NF011945">
    <property type="entry name" value="PRK15416.1"/>
    <property type="match status" value="1"/>
</dbReference>
<dbReference type="Pfam" id="PF00300">
    <property type="entry name" value="His_Phos_1"/>
    <property type="match status" value="1"/>
</dbReference>
<dbReference type="PIRSF" id="PIRSF011416">
    <property type="entry name" value="Ais-TraG-AfrS"/>
    <property type="match status" value="1"/>
</dbReference>
<dbReference type="SUPFAM" id="SSF53254">
    <property type="entry name" value="Phosphoglycerate mutase-like"/>
    <property type="match status" value="1"/>
</dbReference>
<protein>
    <recommendedName>
        <fullName>Lipopolysaccharide core heptose(II)-phosphate phosphatase</fullName>
        <ecNumber>3.1.3.-</ecNumber>
    </recommendedName>
    <alternativeName>
        <fullName>Polymyxin resistance protein PmrG</fullName>
    </alternativeName>
</protein>
<proteinExistence type="evidence at transcript level"/>
<sequence>MLAFTLRFIKNKRYFAILAGALVIIAGLTSQHAWSGNGLPQINGKALAALAKQHPVVVLFRHAERCDRSDNTCLSDSTGITVKGAQDARALGKAFSADIQNYNLYSSNTVRTIQSATWFSAGRSLTVDKKMMDCGSGIYASINTLLKKSQNKNIVIFTHNHCLTYIAKNKRGVKFDPDYLNALVMHAENGKLFLDGEFVPG</sequence>
<accession>Q8ZNF4</accession>
<feature type="signal peptide" evidence="1">
    <location>
        <begin position="1"/>
        <end position="35"/>
    </location>
</feature>
<feature type="chain" id="PRO_0000380586" description="Lipopolysaccharide core heptose(II)-phosphate phosphatase">
    <location>
        <begin position="36"/>
        <end position="201"/>
    </location>
</feature>
<evidence type="ECO:0000255" key="1"/>
<evidence type="ECO:0000269" key="2">
    <source>
    </source>
</evidence>
<evidence type="ECO:0000269" key="3">
    <source>
    </source>
</evidence>
<evidence type="ECO:0000305" key="4"/>
<comment type="function">
    <text evidence="3">Catalyzes the dephosphorylation of heptose(II) of the outer membrane lipopolysaccharide core. Required for iron(3+) resistance.</text>
</comment>
<comment type="pathway">
    <text>Bacterial outer membrane biogenesis; lipopolysaccharide metabolism.</text>
</comment>
<comment type="subcellular location">
    <subcellularLocation>
        <location evidence="3">Periplasm</location>
    </subcellularLocation>
</comment>
<comment type="induction">
    <text evidence="2 3">Induced by BasR.</text>
</comment>
<comment type="similarity">
    <text evidence="4">Belongs to the phosphoglycerate mutase family. Ais subfamily.</text>
</comment>
<keyword id="KW-0378">Hydrolase</keyword>
<keyword id="KW-0574">Periplasm</keyword>
<keyword id="KW-1185">Reference proteome</keyword>
<keyword id="KW-0732">Signal</keyword>
<reference key="1">
    <citation type="journal article" date="2001" name="Nature">
        <title>Complete genome sequence of Salmonella enterica serovar Typhimurium LT2.</title>
        <authorList>
            <person name="McClelland M."/>
            <person name="Sanderson K.E."/>
            <person name="Spieth J."/>
            <person name="Clifton S.W."/>
            <person name="Latreille P."/>
            <person name="Courtney L."/>
            <person name="Porwollik S."/>
            <person name="Ali J."/>
            <person name="Dante M."/>
            <person name="Du F."/>
            <person name="Hou S."/>
            <person name="Layman D."/>
            <person name="Leonard S."/>
            <person name="Nguyen C."/>
            <person name="Scott K."/>
            <person name="Holmes A."/>
            <person name="Grewal N."/>
            <person name="Mulvaney E."/>
            <person name="Ryan E."/>
            <person name="Sun H."/>
            <person name="Florea L."/>
            <person name="Miller W."/>
            <person name="Stoneking T."/>
            <person name="Nhan M."/>
            <person name="Waterston R."/>
            <person name="Wilson R.K."/>
        </authorList>
    </citation>
    <scope>NUCLEOTIDE SEQUENCE [LARGE SCALE GENOMIC DNA]</scope>
    <source>
        <strain>LT2 / SGSC1412 / ATCC 700720</strain>
    </source>
</reference>
<reference key="2">
    <citation type="journal article" date="1999" name="J. Biol. Chem.">
        <title>Molecular characterization of the PmrA regulon.</title>
        <authorList>
            <person name="Woesten M.M.S.M."/>
            <person name="Groisman E.A."/>
        </authorList>
    </citation>
    <scope>INDUCTION BY BASR</scope>
    <source>
        <strain>ATCC 14028s / SGSG 2262</strain>
    </source>
</reference>
<reference key="3">
    <citation type="journal article" date="2006" name="Mol. Microbiol.">
        <title>Identification of the lipopolysaccharide modifications controlled by the Salmonella PmrA/PmrB system mediating resistance to Fe(III) and Al(III).</title>
        <authorList>
            <person name="Nishino K."/>
            <person name="Hsu F.-F."/>
            <person name="Turk J."/>
            <person name="Cromie M.J."/>
            <person name="Woesten M.M.S.M."/>
            <person name="Groisman E.A."/>
        </authorList>
    </citation>
    <scope>FUNCTION</scope>
    <scope>INDUCTION BY BASR</scope>
    <scope>SUBCELLULAR LOCATION</scope>
    <source>
        <strain>ATCC 14028 / SGSG 2980 / CDC 6516-60 / NCTC 12023</strain>
    </source>
</reference>
<name>AIS_SALTY</name>
<gene>
    <name type="primary">ais</name>
    <name type="synonym">pagH</name>
    <name type="synonym">pmrG</name>
    <name type="ordered locus">STM2296</name>
</gene>
<organism>
    <name type="scientific">Salmonella typhimurium (strain LT2 / SGSC1412 / ATCC 700720)</name>
    <dbReference type="NCBI Taxonomy" id="99287"/>
    <lineage>
        <taxon>Bacteria</taxon>
        <taxon>Pseudomonadati</taxon>
        <taxon>Pseudomonadota</taxon>
        <taxon>Gammaproteobacteria</taxon>
        <taxon>Enterobacterales</taxon>
        <taxon>Enterobacteriaceae</taxon>
        <taxon>Salmonella</taxon>
    </lineage>
</organism>